<accession>B2K502</accession>
<sequence>MFDVLIYLFETYMHNEPEMLVDQDKITDDLADAGFYREDINNALNWLEVLADLQEGQKAPYLYTADPQALRIYTVEECRRLGAACRGFILFLEQIQVLQFDTREMVIDRIMALDSPEIDLEDLKWVVLMVLFNIPGYENAYKQMEELLFEVNDGYLH</sequence>
<evidence type="ECO:0000255" key="1">
    <source>
        <dbReference type="HAMAP-Rule" id="MF_00598"/>
    </source>
</evidence>
<proteinExistence type="inferred from homology"/>
<dbReference type="EMBL" id="CP001048">
    <property type="protein sequence ID" value="ACC90804.1"/>
    <property type="molecule type" value="Genomic_DNA"/>
</dbReference>
<dbReference type="RefSeq" id="WP_002209023.1">
    <property type="nucleotide sequence ID" value="NZ_CP009780.1"/>
</dbReference>
<dbReference type="SMR" id="B2K502"/>
<dbReference type="KEGG" id="ypb:YPTS_3855"/>
<dbReference type="PATRIC" id="fig|502801.10.peg.3320"/>
<dbReference type="HAMAP" id="MF_00598">
    <property type="entry name" value="Smg"/>
    <property type="match status" value="1"/>
</dbReference>
<dbReference type="InterPro" id="IPR007456">
    <property type="entry name" value="Smg"/>
</dbReference>
<dbReference type="NCBIfam" id="NF002897">
    <property type="entry name" value="PRK03430.1"/>
    <property type="match status" value="1"/>
</dbReference>
<dbReference type="PANTHER" id="PTHR38692">
    <property type="entry name" value="PROTEIN SMG"/>
    <property type="match status" value="1"/>
</dbReference>
<dbReference type="PANTHER" id="PTHR38692:SF1">
    <property type="entry name" value="PROTEIN SMG"/>
    <property type="match status" value="1"/>
</dbReference>
<dbReference type="Pfam" id="PF04361">
    <property type="entry name" value="DUF494"/>
    <property type="match status" value="1"/>
</dbReference>
<name>SMG_YERPB</name>
<comment type="similarity">
    <text evidence="1">Belongs to the Smg family.</text>
</comment>
<organism>
    <name type="scientific">Yersinia pseudotuberculosis serotype IB (strain PB1/+)</name>
    <dbReference type="NCBI Taxonomy" id="502801"/>
    <lineage>
        <taxon>Bacteria</taxon>
        <taxon>Pseudomonadati</taxon>
        <taxon>Pseudomonadota</taxon>
        <taxon>Gammaproteobacteria</taxon>
        <taxon>Enterobacterales</taxon>
        <taxon>Yersiniaceae</taxon>
        <taxon>Yersinia</taxon>
    </lineage>
</organism>
<feature type="chain" id="PRO_1000129915" description="Protein Smg">
    <location>
        <begin position="1"/>
        <end position="157"/>
    </location>
</feature>
<protein>
    <recommendedName>
        <fullName evidence="1">Protein Smg</fullName>
    </recommendedName>
</protein>
<reference key="1">
    <citation type="submission" date="2008-04" db="EMBL/GenBank/DDBJ databases">
        <title>Complete sequence of Yersinia pseudotuberculosis PB1/+.</title>
        <authorList>
            <person name="Copeland A."/>
            <person name="Lucas S."/>
            <person name="Lapidus A."/>
            <person name="Glavina del Rio T."/>
            <person name="Dalin E."/>
            <person name="Tice H."/>
            <person name="Bruce D."/>
            <person name="Goodwin L."/>
            <person name="Pitluck S."/>
            <person name="Munk A.C."/>
            <person name="Brettin T."/>
            <person name="Detter J.C."/>
            <person name="Han C."/>
            <person name="Tapia R."/>
            <person name="Schmutz J."/>
            <person name="Larimer F."/>
            <person name="Land M."/>
            <person name="Hauser L."/>
            <person name="Challacombe J.F."/>
            <person name="Green L."/>
            <person name="Lindler L.E."/>
            <person name="Nikolich M.P."/>
            <person name="Richardson P."/>
        </authorList>
    </citation>
    <scope>NUCLEOTIDE SEQUENCE [LARGE SCALE GENOMIC DNA]</scope>
    <source>
        <strain>PB1/+</strain>
    </source>
</reference>
<gene>
    <name evidence="1" type="primary">smg</name>
    <name type="ordered locus">YPTS_3855</name>
</gene>